<reference key="1">
    <citation type="journal article" date="2001" name="Nature">
        <title>Complete genome sequence of a multiple drug resistant Salmonella enterica serovar Typhi CT18.</title>
        <authorList>
            <person name="Parkhill J."/>
            <person name="Dougan G."/>
            <person name="James K.D."/>
            <person name="Thomson N.R."/>
            <person name="Pickard D."/>
            <person name="Wain J."/>
            <person name="Churcher C.M."/>
            <person name="Mungall K.L."/>
            <person name="Bentley S.D."/>
            <person name="Holden M.T.G."/>
            <person name="Sebaihia M."/>
            <person name="Baker S."/>
            <person name="Basham D."/>
            <person name="Brooks K."/>
            <person name="Chillingworth T."/>
            <person name="Connerton P."/>
            <person name="Cronin A."/>
            <person name="Davis P."/>
            <person name="Davies R.M."/>
            <person name="Dowd L."/>
            <person name="White N."/>
            <person name="Farrar J."/>
            <person name="Feltwell T."/>
            <person name="Hamlin N."/>
            <person name="Haque A."/>
            <person name="Hien T.T."/>
            <person name="Holroyd S."/>
            <person name="Jagels K."/>
            <person name="Krogh A."/>
            <person name="Larsen T.S."/>
            <person name="Leather S."/>
            <person name="Moule S."/>
            <person name="O'Gaora P."/>
            <person name="Parry C."/>
            <person name="Quail M.A."/>
            <person name="Rutherford K.M."/>
            <person name="Simmonds M."/>
            <person name="Skelton J."/>
            <person name="Stevens K."/>
            <person name="Whitehead S."/>
            <person name="Barrell B.G."/>
        </authorList>
    </citation>
    <scope>NUCLEOTIDE SEQUENCE [LARGE SCALE GENOMIC DNA]</scope>
    <source>
        <strain>CT18</strain>
    </source>
</reference>
<reference key="2">
    <citation type="journal article" date="2003" name="J. Bacteriol.">
        <title>Comparative genomics of Salmonella enterica serovar Typhi strains Ty2 and CT18.</title>
        <authorList>
            <person name="Deng W."/>
            <person name="Liou S.-R."/>
            <person name="Plunkett G. III"/>
            <person name="Mayhew G.F."/>
            <person name="Rose D.J."/>
            <person name="Burland V."/>
            <person name="Kodoyianni V."/>
            <person name="Schwartz D.C."/>
            <person name="Blattner F.R."/>
        </authorList>
    </citation>
    <scope>NUCLEOTIDE SEQUENCE [LARGE SCALE GENOMIC DNA]</scope>
    <source>
        <strain>ATCC 700931 / Ty2</strain>
    </source>
</reference>
<comment type="subcellular location">
    <subcellularLocation>
        <location evidence="1">Periplasm</location>
    </subcellularLocation>
</comment>
<comment type="similarity">
    <text evidence="1">Belongs to the UPF0312 family. Type 1 subfamily.</text>
</comment>
<dbReference type="EMBL" id="AL513382">
    <property type="protein sequence ID" value="CAD08281.1"/>
    <property type="molecule type" value="Genomic_DNA"/>
</dbReference>
<dbReference type="EMBL" id="AE014613">
    <property type="protein sequence ID" value="AAO69386.1"/>
    <property type="molecule type" value="Genomic_DNA"/>
</dbReference>
<dbReference type="RefSeq" id="NP_455651.1">
    <property type="nucleotide sequence ID" value="NC_003198.1"/>
</dbReference>
<dbReference type="RefSeq" id="WP_000739886.1">
    <property type="nucleotide sequence ID" value="NZ_WSUR01000018.1"/>
</dbReference>
<dbReference type="SMR" id="P61352"/>
<dbReference type="STRING" id="220341.gene:17585161"/>
<dbReference type="KEGG" id="stt:t1763"/>
<dbReference type="KEGG" id="sty:STY1194"/>
<dbReference type="PATRIC" id="fig|220341.7.peg.1195"/>
<dbReference type="eggNOG" id="COG2353">
    <property type="taxonomic scope" value="Bacteria"/>
</dbReference>
<dbReference type="HOGENOM" id="CLU_071003_1_2_6"/>
<dbReference type="OMA" id="IDKQGQH"/>
<dbReference type="OrthoDB" id="9811006at2"/>
<dbReference type="Proteomes" id="UP000000541">
    <property type="component" value="Chromosome"/>
</dbReference>
<dbReference type="Proteomes" id="UP000002670">
    <property type="component" value="Chromosome"/>
</dbReference>
<dbReference type="GO" id="GO:0042597">
    <property type="term" value="C:periplasmic space"/>
    <property type="evidence" value="ECO:0007669"/>
    <property type="project" value="UniProtKB-SubCell"/>
</dbReference>
<dbReference type="Gene3D" id="2.40.128.110">
    <property type="entry name" value="Lipid/polyisoprenoid-binding, YceI-like"/>
    <property type="match status" value="1"/>
</dbReference>
<dbReference type="HAMAP" id="MF_00780">
    <property type="entry name" value="UPF0312"/>
    <property type="match status" value="1"/>
</dbReference>
<dbReference type="InterPro" id="IPR007372">
    <property type="entry name" value="Lipid/polyisoprenoid-bd_YceI"/>
</dbReference>
<dbReference type="InterPro" id="IPR036761">
    <property type="entry name" value="TTHA0802/YceI-like_sf"/>
</dbReference>
<dbReference type="InterPro" id="IPR023480">
    <property type="entry name" value="UPF0312/YceI"/>
</dbReference>
<dbReference type="NCBIfam" id="NF002994">
    <property type="entry name" value="PRK03757.1"/>
    <property type="match status" value="1"/>
</dbReference>
<dbReference type="PANTHER" id="PTHR34406">
    <property type="entry name" value="PROTEIN YCEI"/>
    <property type="match status" value="1"/>
</dbReference>
<dbReference type="PANTHER" id="PTHR34406:SF1">
    <property type="entry name" value="PROTEIN YCEI"/>
    <property type="match status" value="1"/>
</dbReference>
<dbReference type="Pfam" id="PF04264">
    <property type="entry name" value="YceI"/>
    <property type="match status" value="1"/>
</dbReference>
<dbReference type="SMART" id="SM00867">
    <property type="entry name" value="YceI"/>
    <property type="match status" value="1"/>
</dbReference>
<dbReference type="SUPFAM" id="SSF101874">
    <property type="entry name" value="YceI-like"/>
    <property type="match status" value="1"/>
</dbReference>
<organism>
    <name type="scientific">Salmonella typhi</name>
    <dbReference type="NCBI Taxonomy" id="90370"/>
    <lineage>
        <taxon>Bacteria</taxon>
        <taxon>Pseudomonadati</taxon>
        <taxon>Pseudomonadota</taxon>
        <taxon>Gammaproteobacteria</taxon>
        <taxon>Enterobacterales</taxon>
        <taxon>Enterobacteriaceae</taxon>
        <taxon>Salmonella</taxon>
    </lineage>
</organism>
<protein>
    <recommendedName>
        <fullName evidence="1">Protein YceI</fullName>
    </recommendedName>
</protein>
<gene>
    <name evidence="1" type="primary">yceI</name>
    <name type="ordered locus">STY1194</name>
    <name type="ordered locus">t1763</name>
</gene>
<feature type="signal peptide" evidence="1">
    <location>
        <begin position="1"/>
        <end position="22"/>
    </location>
</feature>
<feature type="chain" id="PRO_0000036283" description="Protein YceI">
    <location>
        <begin position="23"/>
        <end position="191"/>
    </location>
</feature>
<keyword id="KW-0574">Periplasm</keyword>
<keyword id="KW-0732">Signal</keyword>
<proteinExistence type="inferred from homology"/>
<evidence type="ECO:0000255" key="1">
    <source>
        <dbReference type="HAMAP-Rule" id="MF_00780"/>
    </source>
</evidence>
<sequence length="191" mass="21023">MKKNLLGFTLASLLFTTGSAVAAEYKIDKEGQHAFVNFRIQHLGYSWLYGTFKDFDGTFTFDEKNPSADKVNVTINTNSVDTNHAERDKHLRSAEFLNVAKFPQATFTSTSVKKEGDELDITGNLTLNGVTKPVTLEAKLMGQGDDPWGGKRAGFEAEGKIKLKDFNITTDLGPASQEVELIISVEGVQQK</sequence>
<name>YCEI_SALTI</name>
<accession>P61352</accession>
<accession>Q8XGU0</accession>